<feature type="chain" id="PRO_1000092204" description="Sulfate adenylyltransferase subunit 2">
    <location>
        <begin position="1"/>
        <end position="302"/>
    </location>
</feature>
<proteinExistence type="inferred from homology"/>
<comment type="function">
    <text evidence="1">With CysN forms the ATP sulfurylase (ATPS) that catalyzes the adenylation of sulfate producing adenosine 5'-phosphosulfate (APS) and diphosphate, the first enzymatic step in sulfur assimilation pathway. APS synthesis involves the formation of a high-energy phosphoric-sulfuric acid anhydride bond driven by GTP hydrolysis by CysN coupled to ATP hydrolysis by CysD.</text>
</comment>
<comment type="catalytic activity">
    <reaction evidence="1">
        <text>sulfate + ATP + H(+) = adenosine 5'-phosphosulfate + diphosphate</text>
        <dbReference type="Rhea" id="RHEA:18133"/>
        <dbReference type="ChEBI" id="CHEBI:15378"/>
        <dbReference type="ChEBI" id="CHEBI:16189"/>
        <dbReference type="ChEBI" id="CHEBI:30616"/>
        <dbReference type="ChEBI" id="CHEBI:33019"/>
        <dbReference type="ChEBI" id="CHEBI:58243"/>
        <dbReference type="EC" id="2.7.7.4"/>
    </reaction>
</comment>
<comment type="pathway">
    <text evidence="1">Sulfur metabolism; hydrogen sulfide biosynthesis; sulfite from sulfate: step 1/3.</text>
</comment>
<comment type="subunit">
    <text evidence="1">Heterodimer composed of CysD, the smaller subunit, and CysN.</text>
</comment>
<comment type="similarity">
    <text evidence="1">Belongs to the PAPS reductase family. CysD subfamily.</text>
</comment>
<evidence type="ECO:0000255" key="1">
    <source>
        <dbReference type="HAMAP-Rule" id="MF_00064"/>
    </source>
</evidence>
<organism>
    <name type="scientific">Erwinia tasmaniensis (strain DSM 17950 / CFBP 7177 / CIP 109463 / NCPPB 4357 / Et1/99)</name>
    <dbReference type="NCBI Taxonomy" id="465817"/>
    <lineage>
        <taxon>Bacteria</taxon>
        <taxon>Pseudomonadati</taxon>
        <taxon>Pseudomonadota</taxon>
        <taxon>Gammaproteobacteria</taxon>
        <taxon>Enterobacterales</taxon>
        <taxon>Erwiniaceae</taxon>
        <taxon>Erwinia</taxon>
    </lineage>
</organism>
<reference key="1">
    <citation type="journal article" date="2008" name="Environ. Microbiol.">
        <title>The genome of Erwinia tasmaniensis strain Et1/99, a non-pathogenic bacterium in the genus Erwinia.</title>
        <authorList>
            <person name="Kube M."/>
            <person name="Migdoll A.M."/>
            <person name="Mueller I."/>
            <person name="Kuhl H."/>
            <person name="Beck A."/>
            <person name="Reinhardt R."/>
            <person name="Geider K."/>
        </authorList>
    </citation>
    <scope>NUCLEOTIDE SEQUENCE [LARGE SCALE GENOMIC DNA]</scope>
    <source>
        <strain>DSM 17950 / CFBP 7177 / CIP 109463 / NCPPB 4357 / Et1/99</strain>
    </source>
</reference>
<keyword id="KW-0067">ATP-binding</keyword>
<keyword id="KW-0547">Nucleotide-binding</keyword>
<keyword id="KW-0548">Nucleotidyltransferase</keyword>
<keyword id="KW-1185">Reference proteome</keyword>
<keyword id="KW-0808">Transferase</keyword>
<protein>
    <recommendedName>
        <fullName evidence="1">Sulfate adenylyltransferase subunit 2</fullName>
        <ecNumber evidence="1">2.7.7.4</ecNumber>
    </recommendedName>
    <alternativeName>
        <fullName evidence="1">ATP-sulfurylase small subunit</fullName>
    </alternativeName>
    <alternativeName>
        <fullName evidence="1">Sulfate adenylate transferase</fullName>
        <shortName evidence="1">SAT</shortName>
    </alternativeName>
</protein>
<name>CYSD_ERWT9</name>
<gene>
    <name evidence="1" type="primary">cysD</name>
    <name type="ordered locus">ETA_27060</name>
</gene>
<dbReference type="EC" id="2.7.7.4" evidence="1"/>
<dbReference type="EMBL" id="CU468135">
    <property type="protein sequence ID" value="CAO97752.1"/>
    <property type="molecule type" value="Genomic_DNA"/>
</dbReference>
<dbReference type="RefSeq" id="WP_012442409.1">
    <property type="nucleotide sequence ID" value="NC_010694.1"/>
</dbReference>
<dbReference type="SMR" id="B2VG02"/>
<dbReference type="STRING" id="465817.ETA_27060"/>
<dbReference type="KEGG" id="eta:ETA_27060"/>
<dbReference type="eggNOG" id="COG0175">
    <property type="taxonomic scope" value="Bacteria"/>
</dbReference>
<dbReference type="HOGENOM" id="CLU_043026_0_0_6"/>
<dbReference type="OrthoDB" id="9772604at2"/>
<dbReference type="UniPathway" id="UPA00140">
    <property type="reaction ID" value="UER00204"/>
</dbReference>
<dbReference type="Proteomes" id="UP000001726">
    <property type="component" value="Chromosome"/>
</dbReference>
<dbReference type="GO" id="GO:0005524">
    <property type="term" value="F:ATP binding"/>
    <property type="evidence" value="ECO:0007669"/>
    <property type="project" value="UniProtKB-KW"/>
</dbReference>
<dbReference type="GO" id="GO:0004781">
    <property type="term" value="F:sulfate adenylyltransferase (ATP) activity"/>
    <property type="evidence" value="ECO:0007669"/>
    <property type="project" value="UniProtKB-UniRule"/>
</dbReference>
<dbReference type="GO" id="GO:0070814">
    <property type="term" value="P:hydrogen sulfide biosynthetic process"/>
    <property type="evidence" value="ECO:0007669"/>
    <property type="project" value="UniProtKB-UniRule"/>
</dbReference>
<dbReference type="GO" id="GO:0000103">
    <property type="term" value="P:sulfate assimilation"/>
    <property type="evidence" value="ECO:0007669"/>
    <property type="project" value="UniProtKB-UniRule"/>
</dbReference>
<dbReference type="CDD" id="cd23946">
    <property type="entry name" value="Sulfate_adenylyltransferase_2"/>
    <property type="match status" value="1"/>
</dbReference>
<dbReference type="FunFam" id="3.40.50.620:FF:000002">
    <property type="entry name" value="Sulfate adenylyltransferase subunit 2"/>
    <property type="match status" value="1"/>
</dbReference>
<dbReference type="Gene3D" id="3.40.50.620">
    <property type="entry name" value="HUPs"/>
    <property type="match status" value="1"/>
</dbReference>
<dbReference type="HAMAP" id="MF_00064">
    <property type="entry name" value="Sulf_adenylyltr_sub2"/>
    <property type="match status" value="1"/>
</dbReference>
<dbReference type="InterPro" id="IPR002500">
    <property type="entry name" value="PAPS_reduct_dom"/>
</dbReference>
<dbReference type="InterPro" id="IPR014729">
    <property type="entry name" value="Rossmann-like_a/b/a_fold"/>
</dbReference>
<dbReference type="InterPro" id="IPR011784">
    <property type="entry name" value="SO4_adenylTrfase_ssu"/>
</dbReference>
<dbReference type="InterPro" id="IPR050128">
    <property type="entry name" value="Sulfate_adenylyltrnsfr_sub2"/>
</dbReference>
<dbReference type="NCBIfam" id="TIGR02039">
    <property type="entry name" value="CysD"/>
    <property type="match status" value="1"/>
</dbReference>
<dbReference type="NCBIfam" id="NF003587">
    <property type="entry name" value="PRK05253.1"/>
    <property type="match status" value="1"/>
</dbReference>
<dbReference type="NCBIfam" id="NF009214">
    <property type="entry name" value="PRK12563.1"/>
    <property type="match status" value="1"/>
</dbReference>
<dbReference type="PANTHER" id="PTHR43196">
    <property type="entry name" value="SULFATE ADENYLYLTRANSFERASE SUBUNIT 2"/>
    <property type="match status" value="1"/>
</dbReference>
<dbReference type="PANTHER" id="PTHR43196:SF1">
    <property type="entry name" value="SULFATE ADENYLYLTRANSFERASE SUBUNIT 2"/>
    <property type="match status" value="1"/>
</dbReference>
<dbReference type="Pfam" id="PF01507">
    <property type="entry name" value="PAPS_reduct"/>
    <property type="match status" value="1"/>
</dbReference>
<dbReference type="PIRSF" id="PIRSF002936">
    <property type="entry name" value="CysDAde_trans"/>
    <property type="match status" value="1"/>
</dbReference>
<dbReference type="SUPFAM" id="SSF52402">
    <property type="entry name" value="Adenine nucleotide alpha hydrolases-like"/>
    <property type="match status" value="1"/>
</dbReference>
<sequence length="302" mass="35157">MDQQRLTHLRQLEAESIHIIREVAAEFANPVMMYSIGKDSSVMLHLARKAFYPGTLPFPLLHVDTGWKFREMYEFRDRMVKNIGAELLVHRNPEGLAMGINPFVHGSAKHTDIMKTEGLKQALDKYGFDAAFGGARRDEEKSRAKERIYSFRDRFHRWDPKNQRPELWHNYNGQVNKGESIRVFPLSNWTELDIWQYIFLENIEIVPLYLAAPRPVLERDGMLMMIDDDRINLQPGEVIEQRMVRFRTLGCWPLTGAVESEAQTLPGIIEEMLVSTTSERQGRMIDRDQAGSMELKKRQGYF</sequence>
<accession>B2VG02</accession>